<accession>A8ZV80</accession>
<keyword id="KW-1185">Reference proteome</keyword>
<keyword id="KW-0687">Ribonucleoprotein</keyword>
<keyword id="KW-0689">Ribosomal protein</keyword>
<keyword id="KW-0694">RNA-binding</keyword>
<keyword id="KW-0699">rRNA-binding</keyword>
<reference key="1">
    <citation type="submission" date="2007-10" db="EMBL/GenBank/DDBJ databases">
        <title>Complete sequence of Desulfococcus oleovorans Hxd3.</title>
        <authorList>
            <consortium name="US DOE Joint Genome Institute"/>
            <person name="Copeland A."/>
            <person name="Lucas S."/>
            <person name="Lapidus A."/>
            <person name="Barry K."/>
            <person name="Glavina del Rio T."/>
            <person name="Dalin E."/>
            <person name="Tice H."/>
            <person name="Pitluck S."/>
            <person name="Kiss H."/>
            <person name="Brettin T."/>
            <person name="Bruce D."/>
            <person name="Detter J.C."/>
            <person name="Han C."/>
            <person name="Schmutz J."/>
            <person name="Larimer F."/>
            <person name="Land M."/>
            <person name="Hauser L."/>
            <person name="Kyrpides N."/>
            <person name="Kim E."/>
            <person name="Wawrik B."/>
            <person name="Richardson P."/>
        </authorList>
    </citation>
    <scope>NUCLEOTIDE SEQUENCE [LARGE SCALE GENOMIC DNA]</scope>
    <source>
        <strain>DSM 6200 / JCM 39069 / Hxd3</strain>
    </source>
</reference>
<dbReference type="EMBL" id="CP000859">
    <property type="protein sequence ID" value="ABW66541.1"/>
    <property type="molecule type" value="Genomic_DNA"/>
</dbReference>
<dbReference type="RefSeq" id="WP_012174159.1">
    <property type="nucleotide sequence ID" value="NC_009943.1"/>
</dbReference>
<dbReference type="SMR" id="A8ZV80"/>
<dbReference type="STRING" id="96561.Dole_0731"/>
<dbReference type="KEGG" id="dol:Dole_0731"/>
<dbReference type="eggNOG" id="COG0100">
    <property type="taxonomic scope" value="Bacteria"/>
</dbReference>
<dbReference type="HOGENOM" id="CLU_072439_5_0_7"/>
<dbReference type="OrthoDB" id="9806415at2"/>
<dbReference type="Proteomes" id="UP000008561">
    <property type="component" value="Chromosome"/>
</dbReference>
<dbReference type="GO" id="GO:1990904">
    <property type="term" value="C:ribonucleoprotein complex"/>
    <property type="evidence" value="ECO:0007669"/>
    <property type="project" value="UniProtKB-KW"/>
</dbReference>
<dbReference type="GO" id="GO:0005840">
    <property type="term" value="C:ribosome"/>
    <property type="evidence" value="ECO:0007669"/>
    <property type="project" value="UniProtKB-KW"/>
</dbReference>
<dbReference type="GO" id="GO:0019843">
    <property type="term" value="F:rRNA binding"/>
    <property type="evidence" value="ECO:0007669"/>
    <property type="project" value="UniProtKB-UniRule"/>
</dbReference>
<dbReference type="GO" id="GO:0003735">
    <property type="term" value="F:structural constituent of ribosome"/>
    <property type="evidence" value="ECO:0007669"/>
    <property type="project" value="InterPro"/>
</dbReference>
<dbReference type="GO" id="GO:0006412">
    <property type="term" value="P:translation"/>
    <property type="evidence" value="ECO:0007669"/>
    <property type="project" value="UniProtKB-UniRule"/>
</dbReference>
<dbReference type="FunFam" id="3.30.420.80:FF:000001">
    <property type="entry name" value="30S ribosomal protein S11"/>
    <property type="match status" value="1"/>
</dbReference>
<dbReference type="Gene3D" id="3.30.420.80">
    <property type="entry name" value="Ribosomal protein S11"/>
    <property type="match status" value="1"/>
</dbReference>
<dbReference type="HAMAP" id="MF_01310">
    <property type="entry name" value="Ribosomal_uS11"/>
    <property type="match status" value="1"/>
</dbReference>
<dbReference type="InterPro" id="IPR001971">
    <property type="entry name" value="Ribosomal_uS11"/>
</dbReference>
<dbReference type="InterPro" id="IPR019981">
    <property type="entry name" value="Ribosomal_uS11_bac-type"/>
</dbReference>
<dbReference type="InterPro" id="IPR018102">
    <property type="entry name" value="Ribosomal_uS11_CS"/>
</dbReference>
<dbReference type="InterPro" id="IPR036967">
    <property type="entry name" value="Ribosomal_uS11_sf"/>
</dbReference>
<dbReference type="NCBIfam" id="NF003698">
    <property type="entry name" value="PRK05309.1"/>
    <property type="match status" value="1"/>
</dbReference>
<dbReference type="NCBIfam" id="TIGR03632">
    <property type="entry name" value="uS11_bact"/>
    <property type="match status" value="1"/>
</dbReference>
<dbReference type="PANTHER" id="PTHR11759">
    <property type="entry name" value="40S RIBOSOMAL PROTEIN S14/30S RIBOSOMAL PROTEIN S11"/>
    <property type="match status" value="1"/>
</dbReference>
<dbReference type="Pfam" id="PF00411">
    <property type="entry name" value="Ribosomal_S11"/>
    <property type="match status" value="1"/>
</dbReference>
<dbReference type="PIRSF" id="PIRSF002131">
    <property type="entry name" value="Ribosomal_S11"/>
    <property type="match status" value="1"/>
</dbReference>
<dbReference type="SUPFAM" id="SSF53137">
    <property type="entry name" value="Translational machinery components"/>
    <property type="match status" value="1"/>
</dbReference>
<dbReference type="PROSITE" id="PS00054">
    <property type="entry name" value="RIBOSOMAL_S11"/>
    <property type="match status" value="1"/>
</dbReference>
<sequence length="128" mass="13684">MAKRVQTKKKVRKNIASGVVHIQSTFNNTIVTVTDVAGNVISWSSAGGRGFKGSRKSTPFAAQMASEDAVKKAMAQGLQTVEVYVKGPGPGRESALRALQAAGLTVTMIRDVTPIPHNGCRPPKRRRV</sequence>
<evidence type="ECO:0000255" key="1">
    <source>
        <dbReference type="HAMAP-Rule" id="MF_01310"/>
    </source>
</evidence>
<evidence type="ECO:0000305" key="2"/>
<protein>
    <recommendedName>
        <fullName evidence="1">Small ribosomal subunit protein uS11</fullName>
    </recommendedName>
    <alternativeName>
        <fullName evidence="2">30S ribosomal protein S11</fullName>
    </alternativeName>
</protein>
<proteinExistence type="inferred from homology"/>
<comment type="function">
    <text evidence="1">Located on the platform of the 30S subunit, it bridges several disparate RNA helices of the 16S rRNA. Forms part of the Shine-Dalgarno cleft in the 70S ribosome.</text>
</comment>
<comment type="subunit">
    <text evidence="1">Part of the 30S ribosomal subunit. Interacts with proteins S7 and S18. Binds to IF-3.</text>
</comment>
<comment type="similarity">
    <text evidence="1">Belongs to the universal ribosomal protein uS11 family.</text>
</comment>
<feature type="chain" id="PRO_1000141083" description="Small ribosomal subunit protein uS11">
    <location>
        <begin position="1"/>
        <end position="128"/>
    </location>
</feature>
<gene>
    <name evidence="1" type="primary">rpsK</name>
    <name type="ordered locus">Dole_0731</name>
</gene>
<name>RS11_DESOH</name>
<organism>
    <name type="scientific">Desulfosudis oleivorans (strain DSM 6200 / JCM 39069 / Hxd3)</name>
    <name type="common">Desulfococcus oleovorans</name>
    <dbReference type="NCBI Taxonomy" id="96561"/>
    <lineage>
        <taxon>Bacteria</taxon>
        <taxon>Pseudomonadati</taxon>
        <taxon>Thermodesulfobacteriota</taxon>
        <taxon>Desulfobacteria</taxon>
        <taxon>Desulfobacterales</taxon>
        <taxon>Desulfosudaceae</taxon>
        <taxon>Desulfosudis</taxon>
    </lineage>
</organism>